<evidence type="ECO:0000255" key="1">
    <source>
        <dbReference type="HAMAP-Rule" id="MF_00817"/>
    </source>
</evidence>
<reference key="1">
    <citation type="submission" date="2006-08" db="EMBL/GenBank/DDBJ databases">
        <title>Complete sequence of Shewanella frigidimarina NCIMB 400.</title>
        <authorList>
            <consortium name="US DOE Joint Genome Institute"/>
            <person name="Copeland A."/>
            <person name="Lucas S."/>
            <person name="Lapidus A."/>
            <person name="Barry K."/>
            <person name="Detter J.C."/>
            <person name="Glavina del Rio T."/>
            <person name="Hammon N."/>
            <person name="Israni S."/>
            <person name="Dalin E."/>
            <person name="Tice H."/>
            <person name="Pitluck S."/>
            <person name="Fredrickson J.K."/>
            <person name="Kolker E."/>
            <person name="McCuel L.A."/>
            <person name="DiChristina T."/>
            <person name="Nealson K.H."/>
            <person name="Newman D."/>
            <person name="Tiedje J.M."/>
            <person name="Zhou J."/>
            <person name="Romine M.F."/>
            <person name="Culley D.E."/>
            <person name="Serres M."/>
            <person name="Chertkov O."/>
            <person name="Brettin T."/>
            <person name="Bruce D."/>
            <person name="Han C."/>
            <person name="Tapia R."/>
            <person name="Gilna P."/>
            <person name="Schmutz J."/>
            <person name="Larimer F."/>
            <person name="Land M."/>
            <person name="Hauser L."/>
            <person name="Kyrpides N."/>
            <person name="Mikhailova N."/>
            <person name="Richardson P."/>
        </authorList>
    </citation>
    <scope>NUCLEOTIDE SEQUENCE [LARGE SCALE GENOMIC DNA]</scope>
    <source>
        <strain>NCIMB 400</strain>
    </source>
</reference>
<feature type="chain" id="PRO_1000062362" description="NADPH-dependent 7-cyano-7-deazaguanine reductase">
    <location>
        <begin position="1"/>
        <end position="285"/>
    </location>
</feature>
<feature type="active site" description="Thioimide intermediate" evidence="1">
    <location>
        <position position="193"/>
    </location>
</feature>
<feature type="active site" description="Proton donor" evidence="1">
    <location>
        <position position="200"/>
    </location>
</feature>
<feature type="binding site" evidence="1">
    <location>
        <begin position="91"/>
        <end position="93"/>
    </location>
    <ligand>
        <name>substrate</name>
    </ligand>
</feature>
<feature type="binding site" evidence="1">
    <location>
        <begin position="93"/>
        <end position="94"/>
    </location>
    <ligand>
        <name>NADPH</name>
        <dbReference type="ChEBI" id="CHEBI:57783"/>
    </ligand>
</feature>
<feature type="binding site" evidence="1">
    <location>
        <begin position="232"/>
        <end position="233"/>
    </location>
    <ligand>
        <name>substrate</name>
    </ligand>
</feature>
<feature type="binding site" evidence="1">
    <location>
        <begin position="261"/>
        <end position="262"/>
    </location>
    <ligand>
        <name>NADPH</name>
        <dbReference type="ChEBI" id="CHEBI:57783"/>
    </ligand>
</feature>
<name>QUEF_SHEFN</name>
<protein>
    <recommendedName>
        <fullName evidence="1">NADPH-dependent 7-cyano-7-deazaguanine reductase</fullName>
        <ecNumber evidence="1">1.7.1.13</ecNumber>
    </recommendedName>
    <alternativeName>
        <fullName evidence="1">7-cyano-7-carbaguanine reductase</fullName>
    </alternativeName>
    <alternativeName>
        <fullName evidence="1">NADPH-dependent nitrile oxidoreductase</fullName>
    </alternativeName>
    <alternativeName>
        <fullName evidence="1">PreQ(0) reductase</fullName>
    </alternativeName>
</protein>
<gene>
    <name evidence="1" type="primary">queF</name>
    <name type="ordered locus">Sfri_1248</name>
</gene>
<proteinExistence type="inferred from homology"/>
<accession>Q085G4</accession>
<organism>
    <name type="scientific">Shewanella frigidimarina (strain NCIMB 400)</name>
    <dbReference type="NCBI Taxonomy" id="318167"/>
    <lineage>
        <taxon>Bacteria</taxon>
        <taxon>Pseudomonadati</taxon>
        <taxon>Pseudomonadota</taxon>
        <taxon>Gammaproteobacteria</taxon>
        <taxon>Alteromonadales</taxon>
        <taxon>Shewanellaceae</taxon>
        <taxon>Shewanella</taxon>
    </lineage>
</organism>
<dbReference type="EC" id="1.7.1.13" evidence="1"/>
<dbReference type="EMBL" id="CP000447">
    <property type="protein sequence ID" value="ABI71101.1"/>
    <property type="molecule type" value="Genomic_DNA"/>
</dbReference>
<dbReference type="RefSeq" id="WP_011636722.1">
    <property type="nucleotide sequence ID" value="NC_008345.1"/>
</dbReference>
<dbReference type="SMR" id="Q085G4"/>
<dbReference type="STRING" id="318167.Sfri_1248"/>
<dbReference type="KEGG" id="sfr:Sfri_1248"/>
<dbReference type="eggNOG" id="COG0780">
    <property type="taxonomic scope" value="Bacteria"/>
</dbReference>
<dbReference type="eggNOG" id="COG2904">
    <property type="taxonomic scope" value="Bacteria"/>
</dbReference>
<dbReference type="HOGENOM" id="CLU_054738_0_0_6"/>
<dbReference type="OrthoDB" id="9789995at2"/>
<dbReference type="UniPathway" id="UPA00392"/>
<dbReference type="Proteomes" id="UP000000684">
    <property type="component" value="Chromosome"/>
</dbReference>
<dbReference type="GO" id="GO:0005737">
    <property type="term" value="C:cytoplasm"/>
    <property type="evidence" value="ECO:0007669"/>
    <property type="project" value="UniProtKB-SubCell"/>
</dbReference>
<dbReference type="GO" id="GO:0033739">
    <property type="term" value="F:preQ1 synthase activity"/>
    <property type="evidence" value="ECO:0007669"/>
    <property type="project" value="UniProtKB-UniRule"/>
</dbReference>
<dbReference type="GO" id="GO:0008616">
    <property type="term" value="P:queuosine biosynthetic process"/>
    <property type="evidence" value="ECO:0007669"/>
    <property type="project" value="UniProtKB-UniRule"/>
</dbReference>
<dbReference type="GO" id="GO:0006400">
    <property type="term" value="P:tRNA modification"/>
    <property type="evidence" value="ECO:0007669"/>
    <property type="project" value="UniProtKB-UniRule"/>
</dbReference>
<dbReference type="Gene3D" id="3.30.1130.10">
    <property type="match status" value="2"/>
</dbReference>
<dbReference type="HAMAP" id="MF_00817">
    <property type="entry name" value="QueF_type2"/>
    <property type="match status" value="1"/>
</dbReference>
<dbReference type="InterPro" id="IPR043133">
    <property type="entry name" value="GTP-CH-I_C/QueF"/>
</dbReference>
<dbReference type="InterPro" id="IPR050084">
    <property type="entry name" value="NADPH_dep_7-cyano-7-deazaG_red"/>
</dbReference>
<dbReference type="InterPro" id="IPR029500">
    <property type="entry name" value="QueF"/>
</dbReference>
<dbReference type="InterPro" id="IPR029139">
    <property type="entry name" value="QueF_N"/>
</dbReference>
<dbReference type="InterPro" id="IPR016428">
    <property type="entry name" value="QueF_type2"/>
</dbReference>
<dbReference type="NCBIfam" id="TIGR03138">
    <property type="entry name" value="QueF"/>
    <property type="match status" value="1"/>
</dbReference>
<dbReference type="PANTHER" id="PTHR34354">
    <property type="entry name" value="NADPH-DEPENDENT 7-CYANO-7-DEAZAGUANINE REDUCTASE"/>
    <property type="match status" value="1"/>
</dbReference>
<dbReference type="PANTHER" id="PTHR34354:SF1">
    <property type="entry name" value="NADPH-DEPENDENT 7-CYANO-7-DEAZAGUANINE REDUCTASE"/>
    <property type="match status" value="1"/>
</dbReference>
<dbReference type="Pfam" id="PF14489">
    <property type="entry name" value="QueF"/>
    <property type="match status" value="1"/>
</dbReference>
<dbReference type="Pfam" id="PF14819">
    <property type="entry name" value="QueF_N"/>
    <property type="match status" value="1"/>
</dbReference>
<dbReference type="PIRSF" id="PIRSF004750">
    <property type="entry name" value="Nitrile_oxidored_YqcD_prd"/>
    <property type="match status" value="1"/>
</dbReference>
<dbReference type="SUPFAM" id="SSF55620">
    <property type="entry name" value="Tetrahydrobiopterin biosynthesis enzymes-like"/>
    <property type="match status" value="1"/>
</dbReference>
<comment type="function">
    <text evidence="1">Catalyzes the NADPH-dependent reduction of 7-cyano-7-deazaguanine (preQ0) to 7-aminomethyl-7-deazaguanine (preQ1).</text>
</comment>
<comment type="catalytic activity">
    <reaction evidence="1">
        <text>7-aminomethyl-7-carbaguanine + 2 NADP(+) = 7-cyano-7-deazaguanine + 2 NADPH + 3 H(+)</text>
        <dbReference type="Rhea" id="RHEA:13409"/>
        <dbReference type="ChEBI" id="CHEBI:15378"/>
        <dbReference type="ChEBI" id="CHEBI:45075"/>
        <dbReference type="ChEBI" id="CHEBI:57783"/>
        <dbReference type="ChEBI" id="CHEBI:58349"/>
        <dbReference type="ChEBI" id="CHEBI:58703"/>
        <dbReference type="EC" id="1.7.1.13"/>
    </reaction>
</comment>
<comment type="pathway">
    <text evidence="1">tRNA modification; tRNA-queuosine biosynthesis.</text>
</comment>
<comment type="subunit">
    <text evidence="1">Homodimer.</text>
</comment>
<comment type="subcellular location">
    <subcellularLocation>
        <location evidence="1">Cytoplasm</location>
    </subcellularLocation>
</comment>
<comment type="similarity">
    <text evidence="1">Belongs to the GTP cyclohydrolase I family. QueF type 2 subfamily.</text>
</comment>
<keyword id="KW-0963">Cytoplasm</keyword>
<keyword id="KW-0521">NADP</keyword>
<keyword id="KW-0560">Oxidoreductase</keyword>
<keyword id="KW-0671">Queuosine biosynthesis</keyword>
<keyword id="KW-1185">Reference proteome</keyword>
<sequence>MTHNHDPYSDAAALKGLTLGQATAYQAEYDASLLQGVPRKLNRDAIQLSGELPFHGTDIWTGYELSWLNAKGKPVVAILEVQLDINSVNLIESKSFKLYLNSFNQTKFDSVEAVQETLSRDLAACAEGEVTVKVIEPKHFNLERIIDLPGTCIDDLDIEVTEYEFNPDHLIGGTDPDKNVAETLNSNLLKSNCLITSQPDWGSVMVRYQGPKIDREKLLRYLISFRQHNEFHEQCVERIFVDLKKYCQCTKLTVYARYTRRGGLDINPYRSDFENPPESNRLARQ</sequence>